<organism>
    <name type="scientific">Helicobacter hepaticus (strain ATCC 51449 / 3B1)</name>
    <dbReference type="NCBI Taxonomy" id="235279"/>
    <lineage>
        <taxon>Bacteria</taxon>
        <taxon>Pseudomonadati</taxon>
        <taxon>Campylobacterota</taxon>
        <taxon>Epsilonproteobacteria</taxon>
        <taxon>Campylobacterales</taxon>
        <taxon>Helicobacteraceae</taxon>
        <taxon>Helicobacter</taxon>
    </lineage>
</organism>
<gene>
    <name evidence="1" type="primary">leuC</name>
    <name type="ordered locus">HH_1136</name>
</gene>
<dbReference type="EC" id="4.2.1.33" evidence="1"/>
<dbReference type="EMBL" id="AE017125">
    <property type="protein sequence ID" value="AAP77733.1"/>
    <property type="molecule type" value="Genomic_DNA"/>
</dbReference>
<dbReference type="RefSeq" id="WP_011115976.1">
    <property type="nucleotide sequence ID" value="NC_004917.1"/>
</dbReference>
<dbReference type="SMR" id="Q7VH31"/>
<dbReference type="STRING" id="235279.HH_1136"/>
<dbReference type="KEGG" id="hhe:HH_1136"/>
<dbReference type="eggNOG" id="COG0065">
    <property type="taxonomic scope" value="Bacteria"/>
</dbReference>
<dbReference type="HOGENOM" id="CLU_006714_3_4_7"/>
<dbReference type="OrthoDB" id="9764318at2"/>
<dbReference type="UniPathway" id="UPA00048">
    <property type="reaction ID" value="UER00071"/>
</dbReference>
<dbReference type="Proteomes" id="UP000002495">
    <property type="component" value="Chromosome"/>
</dbReference>
<dbReference type="GO" id="GO:0003861">
    <property type="term" value="F:3-isopropylmalate dehydratase activity"/>
    <property type="evidence" value="ECO:0007669"/>
    <property type="project" value="UniProtKB-UniRule"/>
</dbReference>
<dbReference type="GO" id="GO:0051539">
    <property type="term" value="F:4 iron, 4 sulfur cluster binding"/>
    <property type="evidence" value="ECO:0007669"/>
    <property type="project" value="UniProtKB-KW"/>
</dbReference>
<dbReference type="GO" id="GO:0046872">
    <property type="term" value="F:metal ion binding"/>
    <property type="evidence" value="ECO:0007669"/>
    <property type="project" value="UniProtKB-KW"/>
</dbReference>
<dbReference type="GO" id="GO:0009098">
    <property type="term" value="P:L-leucine biosynthetic process"/>
    <property type="evidence" value="ECO:0007669"/>
    <property type="project" value="UniProtKB-UniRule"/>
</dbReference>
<dbReference type="CDD" id="cd01583">
    <property type="entry name" value="IPMI"/>
    <property type="match status" value="1"/>
</dbReference>
<dbReference type="Gene3D" id="3.30.499.10">
    <property type="entry name" value="Aconitase, domain 3"/>
    <property type="match status" value="2"/>
</dbReference>
<dbReference type="HAMAP" id="MF_01027">
    <property type="entry name" value="LeuC_type2"/>
    <property type="match status" value="1"/>
</dbReference>
<dbReference type="InterPro" id="IPR015931">
    <property type="entry name" value="Acnase/IPM_dHydase_lsu_aba_1/3"/>
</dbReference>
<dbReference type="InterPro" id="IPR001030">
    <property type="entry name" value="Acoase/IPM_deHydtase_lsu_aba"/>
</dbReference>
<dbReference type="InterPro" id="IPR018136">
    <property type="entry name" value="Aconitase_4Fe-4S_BS"/>
</dbReference>
<dbReference type="InterPro" id="IPR036008">
    <property type="entry name" value="Aconitase_4Fe-4S_dom"/>
</dbReference>
<dbReference type="InterPro" id="IPR011826">
    <property type="entry name" value="HAcnase/IPMdehydase_lsu_prok"/>
</dbReference>
<dbReference type="InterPro" id="IPR006251">
    <property type="entry name" value="Homoacnase/IPMdehydase_lsu"/>
</dbReference>
<dbReference type="InterPro" id="IPR050067">
    <property type="entry name" value="IPM_dehydratase_rel_enz"/>
</dbReference>
<dbReference type="InterPro" id="IPR033941">
    <property type="entry name" value="IPMI_cat"/>
</dbReference>
<dbReference type="InterPro" id="IPR011823">
    <property type="entry name" value="IsopropMal_deHydtase_lsu_bac"/>
</dbReference>
<dbReference type="NCBIfam" id="TIGR01343">
    <property type="entry name" value="hacA_fam"/>
    <property type="match status" value="1"/>
</dbReference>
<dbReference type="NCBIfam" id="TIGR02086">
    <property type="entry name" value="IPMI_arch"/>
    <property type="match status" value="1"/>
</dbReference>
<dbReference type="NCBIfam" id="TIGR02083">
    <property type="entry name" value="LEU2"/>
    <property type="match status" value="1"/>
</dbReference>
<dbReference type="NCBIfam" id="NF001614">
    <property type="entry name" value="PRK00402.1"/>
    <property type="match status" value="1"/>
</dbReference>
<dbReference type="PANTHER" id="PTHR43822:SF16">
    <property type="entry name" value="3-ISOPROPYLMALATE DEHYDRATASE LARGE SUBUNIT 2"/>
    <property type="match status" value="1"/>
</dbReference>
<dbReference type="PANTHER" id="PTHR43822">
    <property type="entry name" value="HOMOACONITASE, MITOCHONDRIAL-RELATED"/>
    <property type="match status" value="1"/>
</dbReference>
<dbReference type="Pfam" id="PF00330">
    <property type="entry name" value="Aconitase"/>
    <property type="match status" value="2"/>
</dbReference>
<dbReference type="PRINTS" id="PR00415">
    <property type="entry name" value="ACONITASE"/>
</dbReference>
<dbReference type="SUPFAM" id="SSF53732">
    <property type="entry name" value="Aconitase iron-sulfur domain"/>
    <property type="match status" value="1"/>
</dbReference>
<dbReference type="PROSITE" id="PS00450">
    <property type="entry name" value="ACONITASE_1"/>
    <property type="match status" value="1"/>
</dbReference>
<dbReference type="PROSITE" id="PS01244">
    <property type="entry name" value="ACONITASE_2"/>
    <property type="match status" value="1"/>
</dbReference>
<protein>
    <recommendedName>
        <fullName evidence="1">3-isopropylmalate dehydratase large subunit</fullName>
        <ecNumber evidence="1">4.2.1.33</ecNumber>
    </recommendedName>
    <alternativeName>
        <fullName evidence="1">Alpha-IPM isomerase</fullName>
        <shortName evidence="1">IPMI</shortName>
    </alternativeName>
    <alternativeName>
        <fullName evidence="1">Isopropylmalate isomerase</fullName>
    </alternativeName>
</protein>
<evidence type="ECO:0000255" key="1">
    <source>
        <dbReference type="HAMAP-Rule" id="MF_01027"/>
    </source>
</evidence>
<sequence>MGMTMSQKILADRAGLESVRPNDLIMAKLDMVLGNDITTPVAINAFKEAKFQKVFDKDKISLVMDHFAPNKDIKAATQSAQCRCFAKDFDISHYYDVGNMGVEHALLPEQGIVTIGDLIIGADSHTCTYGALGAFSTGVGSTDMAVGMATGQAWFKVPYAIKFNLKGKLRPYVSGKDVILHIIGKIGVDGALYKSMEFGGEGLKNLTIDDRLCIANMAIEAGAKNGIFEVDDITISYAKGRTKRDFRIYKADVDAEYEQVFDIDLDSINHTVAFPHLPENTKEKDDWGEIKIDQVVIGSCTNGRLSDMAVAAEILKDKTIAKNTRCIIIPATQNIYLECINRGYLETFIKAGAVVSTPTCGPCLGGHMGILAANEKCVSTTNRNFVGRMGHITSEVYLSSPEVAAASAVRGILSAPQDIA</sequence>
<feature type="chain" id="PRO_0000076858" description="3-isopropylmalate dehydratase large subunit">
    <location>
        <begin position="1"/>
        <end position="420"/>
    </location>
</feature>
<feature type="binding site" evidence="1">
    <location>
        <position position="300"/>
    </location>
    <ligand>
        <name>[4Fe-4S] cluster</name>
        <dbReference type="ChEBI" id="CHEBI:49883"/>
    </ligand>
</feature>
<feature type="binding site" evidence="1">
    <location>
        <position position="360"/>
    </location>
    <ligand>
        <name>[4Fe-4S] cluster</name>
        <dbReference type="ChEBI" id="CHEBI:49883"/>
    </ligand>
</feature>
<feature type="binding site" evidence="1">
    <location>
        <position position="363"/>
    </location>
    <ligand>
        <name>[4Fe-4S] cluster</name>
        <dbReference type="ChEBI" id="CHEBI:49883"/>
    </ligand>
</feature>
<comment type="function">
    <text evidence="1">Catalyzes the isomerization between 2-isopropylmalate and 3-isopropylmalate, via the formation of 2-isopropylmaleate.</text>
</comment>
<comment type="catalytic activity">
    <reaction evidence="1">
        <text>(2R,3S)-3-isopropylmalate = (2S)-2-isopropylmalate</text>
        <dbReference type="Rhea" id="RHEA:32287"/>
        <dbReference type="ChEBI" id="CHEBI:1178"/>
        <dbReference type="ChEBI" id="CHEBI:35121"/>
        <dbReference type="EC" id="4.2.1.33"/>
    </reaction>
</comment>
<comment type="cofactor">
    <cofactor evidence="1">
        <name>[4Fe-4S] cluster</name>
        <dbReference type="ChEBI" id="CHEBI:49883"/>
    </cofactor>
    <text evidence="1">Binds 1 [4Fe-4S] cluster per subunit.</text>
</comment>
<comment type="pathway">
    <text evidence="1">Amino-acid biosynthesis; L-leucine biosynthesis; L-leucine from 3-methyl-2-oxobutanoate: step 2/4.</text>
</comment>
<comment type="subunit">
    <text evidence="1">Heterodimer of LeuC and LeuD.</text>
</comment>
<comment type="similarity">
    <text evidence="1">Belongs to the aconitase/IPM isomerase family. LeuC type 2 subfamily.</text>
</comment>
<reference key="1">
    <citation type="journal article" date="2003" name="Proc. Natl. Acad. Sci. U.S.A.">
        <title>The complete genome sequence of the carcinogenic bacterium Helicobacter hepaticus.</title>
        <authorList>
            <person name="Suerbaum S."/>
            <person name="Josenhans C."/>
            <person name="Sterzenbach T."/>
            <person name="Drescher B."/>
            <person name="Brandt P."/>
            <person name="Bell M."/>
            <person name="Droege M."/>
            <person name="Fartmann B."/>
            <person name="Fischer H.-P."/>
            <person name="Ge Z."/>
            <person name="Hoerster A."/>
            <person name="Holland R."/>
            <person name="Klein K."/>
            <person name="Koenig J."/>
            <person name="Macko L."/>
            <person name="Mendz G.L."/>
            <person name="Nyakatura G."/>
            <person name="Schauer D.B."/>
            <person name="Shen Z."/>
            <person name="Weber J."/>
            <person name="Frosch M."/>
            <person name="Fox J.G."/>
        </authorList>
    </citation>
    <scope>NUCLEOTIDE SEQUENCE [LARGE SCALE GENOMIC DNA]</scope>
    <source>
        <strain>ATCC 51449 / 3B1</strain>
    </source>
</reference>
<accession>Q7VH31</accession>
<name>LEUC_HELHP</name>
<keyword id="KW-0004">4Fe-4S</keyword>
<keyword id="KW-0028">Amino-acid biosynthesis</keyword>
<keyword id="KW-0100">Branched-chain amino acid biosynthesis</keyword>
<keyword id="KW-0408">Iron</keyword>
<keyword id="KW-0411">Iron-sulfur</keyword>
<keyword id="KW-0432">Leucine biosynthesis</keyword>
<keyword id="KW-0456">Lyase</keyword>
<keyword id="KW-0479">Metal-binding</keyword>
<keyword id="KW-1185">Reference proteome</keyword>
<proteinExistence type="inferred from homology"/>